<sequence>MTRETERFPAREFQRDLLDWFARERRDLPWRKDRDPYKVWVSEVMLQQTRVETVIPYFEQFIDRFPTLEALADADEDEVLKAWEGLGYYSRVRNLHAAVKEVKTRYGGKVPDDPDEFSRLKGVGPYTVGAVLSLAYGVPEPAVDGNVMRVLSRLFLVTDDIAKPSTRKRFEQIVREIMAYENPGAFNEALIELGALVCTPRRPSCLLCPVQAYCQAFAEGVAEELPVKMKKTAVKQVPLAVAVLADDEGRVLIRKRDSTGLLANLWEFPSCETDGADGKEKLEQMVGEQYGLQVELTEPIVSFEHAFSHLVWQLTVFPGRLVHGGPVEEPYRLAPEDELKAYAFPVSHQRVWREYKEWASGVRRPD</sequence>
<feature type="chain" id="PRO_0000435340" description="Adenine DNA glycosylase">
    <location>
        <begin position="1"/>
        <end position="366"/>
    </location>
</feature>
<feature type="domain" description="HhH" evidence="1">
    <location>
        <begin position="105"/>
        <end position="133"/>
    </location>
</feature>
<feature type="active site" description="Proton donor/acceptor" evidence="11">
    <location>
        <position position="43"/>
    </location>
</feature>
<feature type="binding site" evidence="3">
    <location>
        <begin position="30"/>
        <end position="31"/>
    </location>
    <ligand>
        <name>DNA</name>
        <dbReference type="ChEBI" id="CHEBI:16991"/>
        <note>substrate</note>
    </ligand>
    <ligandPart>
        <name>adenine group</name>
        <dbReference type="ChEBI" id="CHEBI:30756"/>
        <note>mispaired A</note>
    </ligandPart>
</feature>
<feature type="binding site" evidence="2 3">
    <location>
        <begin position="48"/>
        <end position="49"/>
    </location>
    <ligand>
        <name>DNA</name>
        <dbReference type="ChEBI" id="CHEBI:16991"/>
        <note>substrate</note>
    </ligand>
    <ligandPart>
        <name>8-oxoguanine group</name>
        <dbReference type="ChEBI" id="CHEBI:176966"/>
    </ligandPart>
</feature>
<feature type="binding site" evidence="2 3">
    <location>
        <begin position="86"/>
        <end position="88"/>
    </location>
    <ligand>
        <name>DNA</name>
        <dbReference type="ChEBI" id="CHEBI:16991"/>
        <note>substrate</note>
    </ligand>
    <ligandPart>
        <name>8-oxoguanine group</name>
        <dbReference type="ChEBI" id="CHEBI:176966"/>
    </ligandPart>
</feature>
<feature type="binding site" evidence="3">
    <location>
        <position position="126"/>
    </location>
    <ligand>
        <name>DNA</name>
        <dbReference type="ChEBI" id="CHEBI:16991"/>
        <note>substrate</note>
    </ligand>
    <ligandPart>
        <name>adenine group</name>
        <dbReference type="ChEBI" id="CHEBI:30756"/>
        <note>mispaired A</note>
    </ligandPart>
</feature>
<feature type="binding site" evidence="3">
    <location>
        <position position="188"/>
    </location>
    <ligand>
        <name>DNA</name>
        <dbReference type="ChEBI" id="CHEBI:16991"/>
        <note>substrate</note>
    </ligand>
    <ligandPart>
        <name>adenine group</name>
        <dbReference type="ChEBI" id="CHEBI:30756"/>
        <note>mispaired A</note>
    </ligandPart>
</feature>
<feature type="binding site" evidence="2 3 4 5 6 13 14 15">
    <location>
        <position position="198"/>
    </location>
    <ligand>
        <name>[4Fe-4S] cluster</name>
        <dbReference type="ChEBI" id="CHEBI:49883"/>
    </ligand>
</feature>
<feature type="binding site" evidence="2 3 4 5 6 13 14 15">
    <location>
        <position position="205"/>
    </location>
    <ligand>
        <name>[4Fe-4S] cluster</name>
        <dbReference type="ChEBI" id="CHEBI:49883"/>
    </ligand>
</feature>
<feature type="binding site" evidence="2 3 4 5 6 13 14 15">
    <location>
        <position position="208"/>
    </location>
    <ligand>
        <name>[4Fe-4S] cluster</name>
        <dbReference type="ChEBI" id="CHEBI:49883"/>
    </ligand>
</feature>
<feature type="binding site" evidence="2 3 4 5 6 13 14 15">
    <location>
        <position position="214"/>
    </location>
    <ligand>
        <name>[4Fe-4S] cluster</name>
        <dbReference type="ChEBI" id="CHEBI:49883"/>
    </ligand>
</feature>
<feature type="binding site" evidence="2 3">
    <location>
        <position position="308"/>
    </location>
    <ligand>
        <name>DNA</name>
        <dbReference type="ChEBI" id="CHEBI:16991"/>
        <note>substrate</note>
    </ligand>
    <ligandPart>
        <name>8-oxoguanine group</name>
        <dbReference type="ChEBI" id="CHEBI:176966"/>
    </ligandPart>
</feature>
<feature type="site" description="Transition state stabilizer" evidence="11 12">
    <location>
        <position position="144"/>
    </location>
</feature>
<feature type="mutagenesis site" description="Loss of catalytic activity." evidence="3">
    <original>E</original>
    <variation>Q</variation>
    <location>
        <position position="43"/>
    </location>
</feature>
<feature type="mutagenesis site" description="Loss of catalytic activity." evidence="4">
    <original>D</original>
    <variation>N</variation>
    <location>
        <position position="144"/>
    </location>
</feature>
<feature type="helix" evidence="17">
    <location>
        <begin position="10"/>
        <end position="24"/>
    </location>
</feature>
<feature type="helix" evidence="17">
    <location>
        <begin position="29"/>
        <end position="31"/>
    </location>
</feature>
<feature type="helix" evidence="17">
    <location>
        <begin position="36"/>
        <end position="46"/>
    </location>
</feature>
<feature type="helix" evidence="17">
    <location>
        <begin position="51"/>
        <end position="64"/>
    </location>
</feature>
<feature type="helix" evidence="17">
    <location>
        <begin position="68"/>
        <end position="73"/>
    </location>
</feature>
<feature type="helix" evidence="17">
    <location>
        <begin position="76"/>
        <end position="83"/>
    </location>
</feature>
<feature type="turn" evidence="16">
    <location>
        <begin position="84"/>
        <end position="86"/>
    </location>
</feature>
<feature type="helix" evidence="17">
    <location>
        <begin position="90"/>
        <end position="104"/>
    </location>
</feature>
<feature type="turn" evidence="17">
    <location>
        <begin position="105"/>
        <end position="108"/>
    </location>
</feature>
<feature type="helix" evidence="17">
    <location>
        <begin position="114"/>
        <end position="118"/>
    </location>
</feature>
<feature type="helix" evidence="17">
    <location>
        <begin position="125"/>
        <end position="135"/>
    </location>
</feature>
<feature type="helix" evidence="17">
    <location>
        <begin position="145"/>
        <end position="154"/>
    </location>
</feature>
<feature type="helix" evidence="17">
    <location>
        <begin position="164"/>
        <end position="177"/>
    </location>
</feature>
<feature type="helix" evidence="17">
    <location>
        <begin position="183"/>
        <end position="196"/>
    </location>
</feature>
<feature type="strand" evidence="17">
    <location>
        <begin position="200"/>
        <end position="202"/>
    </location>
</feature>
<feature type="turn" evidence="17">
    <location>
        <begin position="205"/>
        <end position="207"/>
    </location>
</feature>
<feature type="helix" evidence="17">
    <location>
        <begin position="211"/>
        <end position="213"/>
    </location>
</feature>
<feature type="helix" evidence="17">
    <location>
        <begin position="215"/>
        <end position="219"/>
    </location>
</feature>
<feature type="helix" evidence="17">
    <location>
        <begin position="222"/>
        <end position="224"/>
    </location>
</feature>
<feature type="strand" evidence="17">
    <location>
        <begin position="235"/>
        <end position="245"/>
    </location>
</feature>
<feature type="strand" evidence="17">
    <location>
        <begin position="249"/>
        <end position="255"/>
    </location>
</feature>
<feature type="strand" evidence="17">
    <location>
        <begin position="258"/>
        <end position="260"/>
    </location>
</feature>
<feature type="turn" evidence="17">
    <location>
        <begin position="261"/>
        <end position="264"/>
    </location>
</feature>
<feature type="strand" evidence="17">
    <location>
        <begin position="270"/>
        <end position="272"/>
    </location>
</feature>
<feature type="strand" evidence="17">
    <location>
        <begin position="274"/>
        <end position="276"/>
    </location>
</feature>
<feature type="helix" evidence="17">
    <location>
        <begin position="278"/>
        <end position="287"/>
    </location>
</feature>
<feature type="strand" evidence="17">
    <location>
        <begin position="294"/>
        <end position="296"/>
    </location>
</feature>
<feature type="strand" evidence="17">
    <location>
        <begin position="301"/>
        <end position="306"/>
    </location>
</feature>
<feature type="strand" evidence="17">
    <location>
        <begin position="308"/>
        <end position="321"/>
    </location>
</feature>
<feature type="strand" evidence="17">
    <location>
        <begin position="331"/>
        <end position="335"/>
    </location>
</feature>
<feature type="helix" evidence="17">
    <location>
        <begin position="336"/>
        <end position="341"/>
    </location>
</feature>
<feature type="helix" evidence="17">
    <location>
        <begin position="346"/>
        <end position="359"/>
    </location>
</feature>
<proteinExistence type="evidence at protein level"/>
<gene>
    <name evidence="7" type="primary">mutY</name>
</gene>
<organism>
    <name type="scientific">Geobacillus stearothermophilus</name>
    <name type="common">Bacillus stearothermophilus</name>
    <dbReference type="NCBI Taxonomy" id="1422"/>
    <lineage>
        <taxon>Bacteria</taxon>
        <taxon>Bacillati</taxon>
        <taxon>Bacillota</taxon>
        <taxon>Bacilli</taxon>
        <taxon>Bacillales</taxon>
        <taxon>Anoxybacillaceae</taxon>
        <taxon>Geobacillus</taxon>
    </lineage>
</organism>
<reference key="1">
    <citation type="journal article" date="2004" name="Nature">
        <title>Structural basis for removal of adenine mispaired with 8-oxoguanine by MutY adenine DNA glycosylase.</title>
        <authorList>
            <person name="Fromme J.C."/>
            <person name="Banerjee A."/>
            <person name="Huang S.J."/>
            <person name="Verdine G.L."/>
        </authorList>
    </citation>
    <scope>X-RAY CRYSTALLOGRAPHY (2.22 ANGSTROMS) OF MUTANT ASN-144 IN COMPLEXES WITH DUPLEX DNA CONTAINING AN A:OXOG MISPAIR AND IRON-SULFUR (4FE-4S)</scope>
    <scope>FUNCTION</scope>
    <scope>COFACTOR</scope>
</reference>
<reference key="2">
    <citation type="journal article" date="2009" name="Proc. Natl. Acad. Sci. U.S.A.">
        <title>Atomic substitution reveals the structural basis for substrate adenine recognition and removal by adenine DNA glycosylase.</title>
        <authorList>
            <person name="Lee S."/>
            <person name="Verdine G.L."/>
        </authorList>
    </citation>
    <scope>X-RAY CRYSTALLOGRAPHY (2.20 ANGSTROMS) OF 9-360 IN COMPLEX WITH IRON-SULFUR (4FE-4S) AND DUPLEX DNA CONTAINING THE UNCLEAVABLE NUCLEOBASE 2'-FLUORO-2'-DEOXYADENOSINE</scope>
    <scope>CATALYTIC ACTIVITY</scope>
    <scope>ACTIVE SITE</scope>
    <scope>REACTION MECHANISM</scope>
    <scope>MUTAGENESIS OF GLU-43</scope>
</reference>
<reference key="3">
    <citation type="submission" date="2009-01" db="PDB data bank">
        <title>Structural illumination of a mutY glycosylase reaction coordinate intermediate.</title>
        <authorList>
            <person name="O'Shea V.L."/>
            <person name="Cao S."/>
            <person name="Richards J.L."/>
            <person name="Horvath M.P."/>
            <person name="David S.S."/>
        </authorList>
    </citation>
    <scope>X-RAY CRYSTALLOGRAPHY (2.20 ANGSTROMS) IN COMPLEX WITH IRON-SULFUR (4FE-4S) AND DUPLEX DNA</scope>
</reference>
<reference key="4">
    <citation type="journal article" date="2015" name="J. Biol. Chem.">
        <title>Structural basis for avoidance of promutagenic DNA repair by MutY adenine DNA glycosylase.</title>
        <authorList>
            <person name="Wang L."/>
            <person name="Lee S.J."/>
            <person name="Verdine G.L."/>
        </authorList>
    </citation>
    <scope>X-RAY CRYSTALLOGRAPHY (2.21 ANGSTROMS) OF WILD-TYPE AND MUTANT ASN-144 IN COMPLEX WITH DUPLEX DNA CONTAINING AN OXOG:C BASE PAIR AND IRON-SULFUR (4FE-4S)</scope>
    <scope>FUNCTION</scope>
    <scope>CATALYTIC ACTIVITY</scope>
    <scope>SUBSTRATE SPECIFICITY</scope>
    <scope>COFACTOR</scope>
    <scope>MUTAGENESIS OF ASP-144</scope>
</reference>
<reference key="5">
    <citation type="submission" date="2015-09" db="PDB data bank">
        <title>Structure and stereochemistry of the base excision repair glycosylase MutY reveal a mechanism similar to retaining glycosidases.</title>
        <authorList>
            <person name="Woods R.D."/>
            <person name="O'Shea V.L."/>
            <person name="Chu A."/>
            <person name="Cao S."/>
            <person name="Richards J.L."/>
            <person name="Horvath M.P."/>
            <person name="David S.S."/>
        </authorList>
    </citation>
    <scope>X-RAY CRYSTALLOGRAPHY (2.20 ANGSTROMS) IN COMPLEX WITH DUPLEX DNA CONTAINING AN A:OXOG MISPAIR AND IRON-SULFUR (4FE-4S)</scope>
</reference>
<name>MUTY_GEOSE</name>
<dbReference type="EC" id="3.2.2.31" evidence="3 4"/>
<dbReference type="PDB" id="1RRQ">
    <property type="method" value="X-ray"/>
    <property type="resolution" value="2.22 A"/>
    <property type="chains" value="A=1-365"/>
</dbReference>
<dbReference type="PDB" id="1RRS">
    <property type="method" value="X-ray"/>
    <property type="resolution" value="2.40 A"/>
    <property type="chains" value="A=1-365"/>
</dbReference>
<dbReference type="PDB" id="1VRL">
    <property type="method" value="X-ray"/>
    <property type="resolution" value="2.50 A"/>
    <property type="chains" value="A=1-365"/>
</dbReference>
<dbReference type="PDB" id="3G0Q">
    <property type="method" value="X-ray"/>
    <property type="resolution" value="2.20 A"/>
    <property type="chains" value="A=9-360"/>
</dbReference>
<dbReference type="PDB" id="4YOQ">
    <property type="method" value="X-ray"/>
    <property type="resolution" value="2.21 A"/>
    <property type="chains" value="A=1-365"/>
</dbReference>
<dbReference type="PDB" id="4YPH">
    <property type="method" value="X-ray"/>
    <property type="resolution" value="2.32 A"/>
    <property type="chains" value="A=1-365"/>
</dbReference>
<dbReference type="PDB" id="4YPR">
    <property type="method" value="X-ray"/>
    <property type="resolution" value="2.59 A"/>
    <property type="chains" value="A/B=1-365"/>
</dbReference>
<dbReference type="PDB" id="5KN8">
    <property type="method" value="X-ray"/>
    <property type="resolution" value="1.81 A"/>
    <property type="chains" value="A=1-229"/>
</dbReference>
<dbReference type="PDB" id="5KN9">
    <property type="method" value="X-ray"/>
    <property type="resolution" value="1.93 A"/>
    <property type="chains" value="A=1-229"/>
</dbReference>
<dbReference type="PDB" id="6Q0C">
    <property type="method" value="X-ray"/>
    <property type="resolution" value="2.00 A"/>
    <property type="chains" value="A=1-365"/>
</dbReference>
<dbReference type="PDB" id="6U7T">
    <property type="method" value="X-ray"/>
    <property type="resolution" value="2.00 A"/>
    <property type="chains" value="A=1-366"/>
</dbReference>
<dbReference type="PDB" id="8DVP">
    <property type="method" value="X-ray"/>
    <property type="resolution" value="1.54 A"/>
    <property type="chains" value="A=1-365"/>
</dbReference>
<dbReference type="PDB" id="8DVY">
    <property type="method" value="X-ray"/>
    <property type="resolution" value="2.36 A"/>
    <property type="chains" value="A=1-365"/>
</dbReference>
<dbReference type="PDB" id="8DW0">
    <property type="method" value="X-ray"/>
    <property type="resolution" value="1.68 A"/>
    <property type="chains" value="A=1-365"/>
</dbReference>
<dbReference type="PDB" id="8DW4">
    <property type="method" value="X-ray"/>
    <property type="resolution" value="2.49 A"/>
    <property type="chains" value="A=1-365"/>
</dbReference>
<dbReference type="PDB" id="8DW7">
    <property type="method" value="X-ray"/>
    <property type="resolution" value="1.96 A"/>
    <property type="chains" value="A/D=1-365"/>
</dbReference>
<dbReference type="PDB" id="8DWD">
    <property type="method" value="X-ray"/>
    <property type="resolution" value="1.68 A"/>
    <property type="chains" value="A=1-365"/>
</dbReference>
<dbReference type="PDB" id="8DWE">
    <property type="method" value="X-ray"/>
    <property type="resolution" value="2.20 A"/>
    <property type="chains" value="A/D=1-365"/>
</dbReference>
<dbReference type="PDB" id="8DWF">
    <property type="method" value="X-ray"/>
    <property type="resolution" value="2.60 A"/>
    <property type="chains" value="A/D=1-365"/>
</dbReference>
<dbReference type="PDB" id="9BS2">
    <property type="method" value="X-ray"/>
    <property type="resolution" value="1.51 A"/>
    <property type="chains" value="A=1-363"/>
</dbReference>
<dbReference type="PDBsum" id="1RRQ"/>
<dbReference type="PDBsum" id="1RRS"/>
<dbReference type="PDBsum" id="1VRL"/>
<dbReference type="PDBsum" id="3G0Q"/>
<dbReference type="PDBsum" id="4YOQ"/>
<dbReference type="PDBsum" id="4YPH"/>
<dbReference type="PDBsum" id="4YPR"/>
<dbReference type="PDBsum" id="5KN8"/>
<dbReference type="PDBsum" id="5KN9"/>
<dbReference type="PDBsum" id="6Q0C"/>
<dbReference type="PDBsum" id="6U7T"/>
<dbReference type="PDBsum" id="8DVP"/>
<dbReference type="PDBsum" id="8DVY"/>
<dbReference type="PDBsum" id="8DW0"/>
<dbReference type="PDBsum" id="8DW4"/>
<dbReference type="PDBsum" id="8DW7"/>
<dbReference type="PDBsum" id="8DWD"/>
<dbReference type="PDBsum" id="8DWE"/>
<dbReference type="PDBsum" id="8DWF"/>
<dbReference type="PDBsum" id="9BS2"/>
<dbReference type="SMR" id="P83847"/>
<dbReference type="BRENDA" id="3.2.2.31">
    <property type="organism ID" value="623"/>
</dbReference>
<dbReference type="EvolutionaryTrace" id="P83847"/>
<dbReference type="GO" id="GO:0051539">
    <property type="term" value="F:4 iron, 4 sulfur cluster binding"/>
    <property type="evidence" value="ECO:0000314"/>
    <property type="project" value="UniProtKB"/>
</dbReference>
<dbReference type="GO" id="GO:0034039">
    <property type="term" value="F:8-oxo-7,8-dihydroguanine DNA N-glycosylase activity"/>
    <property type="evidence" value="ECO:0007669"/>
    <property type="project" value="TreeGrafter"/>
</dbReference>
<dbReference type="GO" id="GO:0035485">
    <property type="term" value="F:adenine/guanine mispair binding"/>
    <property type="evidence" value="ECO:0007669"/>
    <property type="project" value="TreeGrafter"/>
</dbReference>
<dbReference type="GO" id="GO:0003677">
    <property type="term" value="F:DNA binding"/>
    <property type="evidence" value="ECO:0000314"/>
    <property type="project" value="UniProtKB"/>
</dbReference>
<dbReference type="GO" id="GO:0019104">
    <property type="term" value="F:DNA N-glycosylase activity"/>
    <property type="evidence" value="ECO:0000314"/>
    <property type="project" value="UniProtKB"/>
</dbReference>
<dbReference type="GO" id="GO:0046872">
    <property type="term" value="F:metal ion binding"/>
    <property type="evidence" value="ECO:0007669"/>
    <property type="project" value="UniProtKB-KW"/>
</dbReference>
<dbReference type="GO" id="GO:0032357">
    <property type="term" value="F:oxidized purine DNA binding"/>
    <property type="evidence" value="ECO:0007669"/>
    <property type="project" value="TreeGrafter"/>
</dbReference>
<dbReference type="GO" id="GO:0000701">
    <property type="term" value="F:purine-specific mismatch base pair DNA N-glycosylase activity"/>
    <property type="evidence" value="ECO:0007669"/>
    <property type="project" value="UniProtKB-EC"/>
</dbReference>
<dbReference type="GO" id="GO:0006284">
    <property type="term" value="P:base-excision repair"/>
    <property type="evidence" value="ECO:0000314"/>
    <property type="project" value="UniProtKB"/>
</dbReference>
<dbReference type="GO" id="GO:0006298">
    <property type="term" value="P:mismatch repair"/>
    <property type="evidence" value="ECO:0007669"/>
    <property type="project" value="TreeGrafter"/>
</dbReference>
<dbReference type="CDD" id="cd00056">
    <property type="entry name" value="ENDO3c"/>
    <property type="match status" value="1"/>
</dbReference>
<dbReference type="CDD" id="cd03431">
    <property type="entry name" value="NUDIX_DNA_Glycosylase_C-MutY"/>
    <property type="match status" value="1"/>
</dbReference>
<dbReference type="FunFam" id="1.10.1670.10:FF:000002">
    <property type="entry name" value="Adenine DNA glycosylase"/>
    <property type="match status" value="1"/>
</dbReference>
<dbReference type="FunFam" id="1.10.340.30:FF:000010">
    <property type="entry name" value="Adenine DNA glycosylase"/>
    <property type="match status" value="1"/>
</dbReference>
<dbReference type="Gene3D" id="1.10.1670.10">
    <property type="entry name" value="Helix-hairpin-Helix base-excision DNA repair enzymes (C-terminal)"/>
    <property type="match status" value="1"/>
</dbReference>
<dbReference type="Gene3D" id="1.10.340.30">
    <property type="entry name" value="Hypothetical protein, domain 2"/>
    <property type="match status" value="1"/>
</dbReference>
<dbReference type="Gene3D" id="3.90.79.10">
    <property type="entry name" value="Nucleoside Triphosphate Pyrophosphohydrolase"/>
    <property type="match status" value="1"/>
</dbReference>
<dbReference type="InterPro" id="IPR005760">
    <property type="entry name" value="A/G_AdeGlyc_MutY"/>
</dbReference>
<dbReference type="InterPro" id="IPR011257">
    <property type="entry name" value="DNA_glycosylase"/>
</dbReference>
<dbReference type="InterPro" id="IPR003651">
    <property type="entry name" value="Endonuclease3_FeS-loop_motif"/>
</dbReference>
<dbReference type="InterPro" id="IPR003265">
    <property type="entry name" value="HhH-GPD_domain"/>
</dbReference>
<dbReference type="InterPro" id="IPR023170">
    <property type="entry name" value="HhH_base_excis_C"/>
</dbReference>
<dbReference type="InterPro" id="IPR000445">
    <property type="entry name" value="HhH_motif"/>
</dbReference>
<dbReference type="InterPro" id="IPR044298">
    <property type="entry name" value="MIG/MutY"/>
</dbReference>
<dbReference type="InterPro" id="IPR029119">
    <property type="entry name" value="MutY_C"/>
</dbReference>
<dbReference type="InterPro" id="IPR015797">
    <property type="entry name" value="NUDIX_hydrolase-like_dom_sf"/>
</dbReference>
<dbReference type="NCBIfam" id="TIGR01084">
    <property type="entry name" value="mutY"/>
    <property type="match status" value="1"/>
</dbReference>
<dbReference type="PANTHER" id="PTHR42944">
    <property type="entry name" value="ADENINE DNA GLYCOSYLASE"/>
    <property type="match status" value="1"/>
</dbReference>
<dbReference type="PANTHER" id="PTHR42944:SF1">
    <property type="entry name" value="ADENINE DNA GLYCOSYLASE"/>
    <property type="match status" value="1"/>
</dbReference>
<dbReference type="Pfam" id="PF10576">
    <property type="entry name" value="EndIII_4Fe-2S"/>
    <property type="match status" value="1"/>
</dbReference>
<dbReference type="Pfam" id="PF00633">
    <property type="entry name" value="HHH"/>
    <property type="match status" value="1"/>
</dbReference>
<dbReference type="Pfam" id="PF00730">
    <property type="entry name" value="HhH-GPD"/>
    <property type="match status" value="1"/>
</dbReference>
<dbReference type="Pfam" id="PF14815">
    <property type="entry name" value="NUDIX_4"/>
    <property type="match status" value="1"/>
</dbReference>
<dbReference type="SMART" id="SM00478">
    <property type="entry name" value="ENDO3c"/>
    <property type="match status" value="1"/>
</dbReference>
<dbReference type="SMART" id="SM00525">
    <property type="entry name" value="FES"/>
    <property type="match status" value="1"/>
</dbReference>
<dbReference type="SUPFAM" id="SSF48150">
    <property type="entry name" value="DNA-glycosylase"/>
    <property type="match status" value="1"/>
</dbReference>
<dbReference type="SUPFAM" id="SSF55811">
    <property type="entry name" value="Nudix"/>
    <property type="match status" value="1"/>
</dbReference>
<evidence type="ECO:0000255" key="1"/>
<evidence type="ECO:0000269" key="2">
    <source>
    </source>
</evidence>
<evidence type="ECO:0000269" key="3">
    <source>
    </source>
</evidence>
<evidence type="ECO:0000269" key="4">
    <source>
    </source>
</evidence>
<evidence type="ECO:0000269" key="5">
    <source ref="3"/>
</evidence>
<evidence type="ECO:0000269" key="6">
    <source ref="5"/>
</evidence>
<evidence type="ECO:0000303" key="7">
    <source>
    </source>
</evidence>
<evidence type="ECO:0000303" key="8">
    <source>
    </source>
</evidence>
<evidence type="ECO:0000305" key="9"/>
<evidence type="ECO:0000305" key="10">
    <source>
    </source>
</evidence>
<evidence type="ECO:0000305" key="11">
    <source>
    </source>
</evidence>
<evidence type="ECO:0000305" key="12">
    <source>
    </source>
</evidence>
<evidence type="ECO:0007744" key="13">
    <source>
        <dbReference type="PDB" id="1RRQ"/>
    </source>
</evidence>
<evidence type="ECO:0007744" key="14">
    <source>
        <dbReference type="PDB" id="1RRS"/>
    </source>
</evidence>
<evidence type="ECO:0007744" key="15">
    <source>
        <dbReference type="PDB" id="1VRL"/>
    </source>
</evidence>
<evidence type="ECO:0007829" key="16">
    <source>
        <dbReference type="PDB" id="5KN9"/>
    </source>
</evidence>
<evidence type="ECO:0007829" key="17">
    <source>
        <dbReference type="PDB" id="8DVP"/>
    </source>
</evidence>
<comment type="function">
    <text evidence="4 10">Base excision repair (BER) glycosylase that initiates repair of A:oxoG to C:G by removing the inappropriately paired adenine base from the DNA backbone, generating an abasic site product (PubMed:14961129, PubMed:25995449). 8-oxoguanine (oxoG) is a genotoxic DNA lesion resulting from oxidation of guanine; this residue is misread by replicative DNA polymerases, that insert adenine instead of cytosine opposite the oxidized damaged base. Shows a powerful dicrimination of A versus C, since it does not cleave cytosine in oxoG:C pairs (PubMed:25995449). May also be able to remove adenine from A:G mispairs, although this activity may not be physiologically relevant (PubMed:14961129).</text>
</comment>
<comment type="catalytic activity">
    <reaction evidence="3 4">
        <text>Hydrolyzes free adenine bases from 7,8-dihydro-8-oxoguanine:adenine mismatched double-stranded DNA, leaving an apurinic site.</text>
        <dbReference type="EC" id="3.2.2.31"/>
    </reaction>
</comment>
<comment type="cofactor">
    <cofactor evidence="10 12">
        <name>[4Fe-4S] cluster</name>
        <dbReference type="ChEBI" id="CHEBI:49883"/>
    </cofactor>
    <text evidence="2 4">Binds 1 [4Fe-4S] cluster (PubMed:14961129, PubMed:25995449). The cluster has a structural role (PubMed:14961129).</text>
</comment>
<comment type="similarity">
    <text evidence="9">Belongs to the Nth/MutY family.</text>
</comment>
<keyword id="KW-0002">3D-structure</keyword>
<keyword id="KW-0004">4Fe-4S</keyword>
<keyword id="KW-0227">DNA damage</keyword>
<keyword id="KW-0234">DNA repair</keyword>
<keyword id="KW-0238">DNA-binding</keyword>
<keyword id="KW-0326">Glycosidase</keyword>
<keyword id="KW-0378">Hydrolase</keyword>
<keyword id="KW-0408">Iron</keyword>
<keyword id="KW-0411">Iron-sulfur</keyword>
<keyword id="KW-0479">Metal-binding</keyword>
<protein>
    <recommendedName>
        <fullName evidence="7 8">Adenine DNA glycosylase</fullName>
        <ecNumber evidence="3 4">3.2.2.31</ecNumber>
    </recommendedName>
    <alternativeName>
        <fullName evidence="8">oxoG:A-specific adenine glycosylase</fullName>
    </alternativeName>
</protein>
<accession>P83847</accession>